<keyword id="KW-0997">Cell inner membrane</keyword>
<keyword id="KW-1003">Cell membrane</keyword>
<keyword id="KW-0406">Ion transport</keyword>
<keyword id="KW-0472">Membrane</keyword>
<keyword id="KW-0520">NAD</keyword>
<keyword id="KW-1185">Reference proteome</keyword>
<keyword id="KW-0915">Sodium</keyword>
<keyword id="KW-0739">Sodium transport</keyword>
<keyword id="KW-1278">Translocase</keyword>
<keyword id="KW-0812">Transmembrane</keyword>
<keyword id="KW-1133">Transmembrane helix</keyword>
<keyword id="KW-0813">Transport</keyword>
<keyword id="KW-0830">Ubiquinone</keyword>
<comment type="function">
    <text evidence="1">NQR complex catalyzes the reduction of ubiquinone-1 to ubiquinol by two successive reactions, coupled with the transport of Na(+) ions from the cytoplasm to the periplasm. NqrA to NqrE are probably involved in the second step, the conversion of ubisemiquinone to ubiquinol.</text>
</comment>
<comment type="catalytic activity">
    <reaction evidence="1">
        <text>a ubiquinone + n Na(+)(in) + NADH + H(+) = a ubiquinol + n Na(+)(out) + NAD(+)</text>
        <dbReference type="Rhea" id="RHEA:47748"/>
        <dbReference type="Rhea" id="RHEA-COMP:9565"/>
        <dbReference type="Rhea" id="RHEA-COMP:9566"/>
        <dbReference type="ChEBI" id="CHEBI:15378"/>
        <dbReference type="ChEBI" id="CHEBI:16389"/>
        <dbReference type="ChEBI" id="CHEBI:17976"/>
        <dbReference type="ChEBI" id="CHEBI:29101"/>
        <dbReference type="ChEBI" id="CHEBI:57540"/>
        <dbReference type="ChEBI" id="CHEBI:57945"/>
        <dbReference type="EC" id="7.2.1.1"/>
    </reaction>
</comment>
<comment type="subunit">
    <text evidence="1">Composed of six subunits; NqrA, NqrB, NqrC, NqrD, NqrE and NqrF.</text>
</comment>
<comment type="subcellular location">
    <subcellularLocation>
        <location evidence="1">Cell inner membrane</location>
        <topology evidence="1">Multi-pass membrane protein</topology>
    </subcellularLocation>
</comment>
<comment type="similarity">
    <text evidence="1">Belongs to the NqrDE/RnfAE family.</text>
</comment>
<gene>
    <name evidence="1" type="primary">nqrD</name>
    <name type="ordered locus">plu1199</name>
</gene>
<proteinExistence type="inferred from homology"/>
<name>NQRD_PHOLL</name>
<accession>Q7N7F1</accession>
<sequence>MADSKEIKRVLLGPLLDNNPIALQVLGICSALAVTTKLETALVMTIAVTLVTAFSSFFISLIRHYIPGSVRIIVQMAIIASLVIVVDQILQAYAYEISKQLSVFVGLIITNCIVMGRAEAYAMKSPPIESFMDGIGNGLGYGVILVLVGFLRELFGSGKLFGITVMESVQNGGWYQPNGLFLLAPSAFFIIGMLIWGLRTLKPAQVEKE</sequence>
<reference key="1">
    <citation type="journal article" date="2003" name="Nat. Biotechnol.">
        <title>The genome sequence of the entomopathogenic bacterium Photorhabdus luminescens.</title>
        <authorList>
            <person name="Duchaud E."/>
            <person name="Rusniok C."/>
            <person name="Frangeul L."/>
            <person name="Buchrieser C."/>
            <person name="Givaudan A."/>
            <person name="Taourit S."/>
            <person name="Bocs S."/>
            <person name="Boursaux-Eude C."/>
            <person name="Chandler M."/>
            <person name="Charles J.-F."/>
            <person name="Dassa E."/>
            <person name="Derose R."/>
            <person name="Derzelle S."/>
            <person name="Freyssinet G."/>
            <person name="Gaudriault S."/>
            <person name="Medigue C."/>
            <person name="Lanois A."/>
            <person name="Powell K."/>
            <person name="Siguier P."/>
            <person name="Vincent R."/>
            <person name="Wingate V."/>
            <person name="Zouine M."/>
            <person name="Glaser P."/>
            <person name="Boemare N."/>
            <person name="Danchin A."/>
            <person name="Kunst F."/>
        </authorList>
    </citation>
    <scope>NUCLEOTIDE SEQUENCE [LARGE SCALE GENOMIC DNA]</scope>
    <source>
        <strain>DSM 15139 / CIP 105565 / TT01</strain>
    </source>
</reference>
<evidence type="ECO:0000255" key="1">
    <source>
        <dbReference type="HAMAP-Rule" id="MF_00428"/>
    </source>
</evidence>
<dbReference type="EC" id="7.2.1.1" evidence="1"/>
<dbReference type="EMBL" id="BX571862">
    <property type="protein sequence ID" value="CAE13493.1"/>
    <property type="molecule type" value="Genomic_DNA"/>
</dbReference>
<dbReference type="RefSeq" id="WP_011145526.1">
    <property type="nucleotide sequence ID" value="NC_005126.1"/>
</dbReference>
<dbReference type="SMR" id="Q7N7F1"/>
<dbReference type="STRING" id="243265.plu1199"/>
<dbReference type="GeneID" id="88807747"/>
<dbReference type="KEGG" id="plu:plu1199"/>
<dbReference type="eggNOG" id="COG1347">
    <property type="taxonomic scope" value="Bacteria"/>
</dbReference>
<dbReference type="HOGENOM" id="CLU_046659_1_1_6"/>
<dbReference type="OrthoDB" id="9782945at2"/>
<dbReference type="Proteomes" id="UP000002514">
    <property type="component" value="Chromosome"/>
</dbReference>
<dbReference type="GO" id="GO:0005886">
    <property type="term" value="C:plasma membrane"/>
    <property type="evidence" value="ECO:0007669"/>
    <property type="project" value="UniProtKB-SubCell"/>
</dbReference>
<dbReference type="GO" id="GO:0016655">
    <property type="term" value="F:oxidoreductase activity, acting on NAD(P)H, quinone or similar compound as acceptor"/>
    <property type="evidence" value="ECO:0007669"/>
    <property type="project" value="UniProtKB-UniRule"/>
</dbReference>
<dbReference type="GO" id="GO:0006814">
    <property type="term" value="P:sodium ion transport"/>
    <property type="evidence" value="ECO:0007669"/>
    <property type="project" value="UniProtKB-UniRule"/>
</dbReference>
<dbReference type="HAMAP" id="MF_00428">
    <property type="entry name" value="NqrD"/>
    <property type="match status" value="1"/>
</dbReference>
<dbReference type="InterPro" id="IPR011292">
    <property type="entry name" value="NqrD"/>
</dbReference>
<dbReference type="InterPro" id="IPR003667">
    <property type="entry name" value="NqrDE/RnfAE"/>
</dbReference>
<dbReference type="NCBIfam" id="TIGR01939">
    <property type="entry name" value="nqrD"/>
    <property type="match status" value="1"/>
</dbReference>
<dbReference type="NCBIfam" id="NF006777">
    <property type="entry name" value="PRK09292.1"/>
    <property type="match status" value="1"/>
</dbReference>
<dbReference type="NCBIfam" id="NF009070">
    <property type="entry name" value="PRK12405.1"/>
    <property type="match status" value="1"/>
</dbReference>
<dbReference type="PANTHER" id="PTHR30586">
    <property type="entry name" value="ELECTRON TRANSPORT COMPLEX PROTEIN RNFE"/>
    <property type="match status" value="1"/>
</dbReference>
<dbReference type="PANTHER" id="PTHR30586:SF1">
    <property type="entry name" value="NA(+)-TRANSLOCATING NADH-QUINONE REDUCTASE SUBUNIT D"/>
    <property type="match status" value="1"/>
</dbReference>
<dbReference type="Pfam" id="PF02508">
    <property type="entry name" value="Rnf-Nqr"/>
    <property type="match status" value="1"/>
</dbReference>
<dbReference type="PIRSF" id="PIRSF006102">
    <property type="entry name" value="NQR_DE"/>
    <property type="match status" value="1"/>
</dbReference>
<organism>
    <name type="scientific">Photorhabdus laumondii subsp. laumondii (strain DSM 15139 / CIP 105565 / TT01)</name>
    <name type="common">Photorhabdus luminescens subsp. laumondii</name>
    <dbReference type="NCBI Taxonomy" id="243265"/>
    <lineage>
        <taxon>Bacteria</taxon>
        <taxon>Pseudomonadati</taxon>
        <taxon>Pseudomonadota</taxon>
        <taxon>Gammaproteobacteria</taxon>
        <taxon>Enterobacterales</taxon>
        <taxon>Morganellaceae</taxon>
        <taxon>Photorhabdus</taxon>
    </lineage>
</organism>
<protein>
    <recommendedName>
        <fullName evidence="1">Na(+)-translocating NADH-quinone reductase subunit D</fullName>
        <shortName evidence="1">Na(+)-NQR subunit D</shortName>
        <shortName evidence="1">Na(+)-translocating NQR subunit D</shortName>
        <ecNumber evidence="1">7.2.1.1</ecNumber>
    </recommendedName>
    <alternativeName>
        <fullName evidence="1">NQR complex subunit D</fullName>
    </alternativeName>
    <alternativeName>
        <fullName evidence="1">NQR-1 subunit D</fullName>
    </alternativeName>
</protein>
<feature type="chain" id="PRO_1000060157" description="Na(+)-translocating NADH-quinone reductase subunit D">
    <location>
        <begin position="1"/>
        <end position="209"/>
    </location>
</feature>
<feature type="transmembrane region" description="Helical" evidence="1">
    <location>
        <begin position="42"/>
        <end position="62"/>
    </location>
</feature>
<feature type="transmembrane region" description="Helical" evidence="1">
    <location>
        <begin position="72"/>
        <end position="92"/>
    </location>
</feature>
<feature type="transmembrane region" description="Helical" evidence="1">
    <location>
        <begin position="103"/>
        <end position="123"/>
    </location>
</feature>
<feature type="transmembrane region" description="Helical" evidence="1">
    <location>
        <begin position="131"/>
        <end position="151"/>
    </location>
</feature>
<feature type="transmembrane region" description="Helical" evidence="1">
    <location>
        <begin position="178"/>
        <end position="198"/>
    </location>
</feature>